<proteinExistence type="evidence at transcript level"/>
<evidence type="ECO:0000255" key="1">
    <source>
        <dbReference type="PROSITE-ProRule" id="PRU00042"/>
    </source>
</evidence>
<evidence type="ECO:0000305" key="2"/>
<feature type="chain" id="PRO_0000233992" description="Zinc finger protein 672">
    <location>
        <begin position="1"/>
        <end position="468"/>
    </location>
</feature>
<feature type="zinc finger region" description="C2H2-type 1" evidence="1">
    <location>
        <begin position="15"/>
        <end position="37"/>
    </location>
</feature>
<feature type="zinc finger region" description="C2H2-type 2" evidence="1">
    <location>
        <begin position="43"/>
        <end position="65"/>
    </location>
</feature>
<feature type="zinc finger region" description="C2H2-type 3" evidence="1">
    <location>
        <begin position="71"/>
        <end position="93"/>
    </location>
</feature>
<feature type="zinc finger region" description="C2H2-type 4" evidence="1">
    <location>
        <begin position="100"/>
        <end position="123"/>
    </location>
</feature>
<feature type="zinc finger region" description="C2H2-type 5; degenerate" evidence="1">
    <location>
        <begin position="129"/>
        <end position="151"/>
    </location>
</feature>
<feature type="zinc finger region" description="C2H2-type 6" evidence="1">
    <location>
        <begin position="167"/>
        <end position="189"/>
    </location>
</feature>
<feature type="zinc finger region" description="C2H2-type 7" evidence="1">
    <location>
        <begin position="202"/>
        <end position="224"/>
    </location>
</feature>
<feature type="zinc finger region" description="C2H2-type 8" evidence="1">
    <location>
        <begin position="230"/>
        <end position="252"/>
    </location>
</feature>
<feature type="zinc finger region" description="C2H2-type 9" evidence="1">
    <location>
        <begin position="258"/>
        <end position="280"/>
    </location>
</feature>
<feature type="zinc finger region" description="C2H2-type 10" evidence="1">
    <location>
        <begin position="286"/>
        <end position="308"/>
    </location>
</feature>
<feature type="zinc finger region" description="C2H2-type 11" evidence="1">
    <location>
        <begin position="314"/>
        <end position="336"/>
    </location>
</feature>
<feature type="zinc finger region" description="C2H2-type 12" evidence="1">
    <location>
        <begin position="342"/>
        <end position="364"/>
    </location>
</feature>
<feature type="zinc finger region" description="C2H2-type 13" evidence="1">
    <location>
        <begin position="370"/>
        <end position="392"/>
    </location>
</feature>
<feature type="zinc finger region" description="C2H2-type 14" evidence="1">
    <location>
        <begin position="398"/>
        <end position="420"/>
    </location>
</feature>
<feature type="sequence conflict" description="In Ref. 1; BAC26575." evidence="2" ref="1">
    <original>R</original>
    <variation>H</variation>
    <location>
        <position position="306"/>
    </location>
</feature>
<gene>
    <name type="primary">Znf672</name>
    <name type="synonym">Zfp672</name>
</gene>
<comment type="function">
    <text>May be involved in transcriptional regulation.</text>
</comment>
<comment type="subcellular location">
    <subcellularLocation>
        <location evidence="2">Nucleus</location>
    </subcellularLocation>
</comment>
<comment type="similarity">
    <text evidence="2">Belongs to the krueppel C2H2-type zinc-finger protein family.</text>
</comment>
<sequence length="468" mass="52154">MFTAPGMATTQERPYSCSVCGKSFQYSAVLLRHERAHGGDKRFCCLECGERCARAADLRAHRWTHAGQTLYICSECGQSFSHSGLLDLHLGTHRRRSRTRPCRLCGRRFPHVPALLLHRARQHPPEKPHRCPLCARSFRQSALPFHLARAHPPEIITVTAPSPSTLYHCTQCPRAFHSSAGLRNHSRIHVVPSLSDPGTEAHLCGICGKSFSKSSTLTRHLQRHSGEKPFKCPECGKGFLESATLVRHQRTHTGEKPYACSDCGRCFSESSTLLRHQRSHQGERPHVCATCGKGFGQRYDLVVHQRSHTGERPFPCPQCGRGFTDRSDLTKHLRTHTGEKPYHCELCGKRFTCISNLNVHLRNHAGHKPHKCPECGKSFSVASKLALHRKTHLGERTAECTECGKFFSHGRSLSQHQRSHRRARAAAMAATTTTTVVTEVTIGPSLTLTGPTEQEKSGLLVSPFQETC</sequence>
<dbReference type="EMBL" id="AK029711">
    <property type="protein sequence ID" value="BAC26575.1"/>
    <property type="molecule type" value="mRNA"/>
</dbReference>
<dbReference type="EMBL" id="AK035113">
    <property type="protein sequence ID" value="BAC28948.1"/>
    <property type="molecule type" value="mRNA"/>
</dbReference>
<dbReference type="EMBL" id="AK085166">
    <property type="protein sequence ID" value="BAC39380.1"/>
    <property type="molecule type" value="mRNA"/>
</dbReference>
<dbReference type="EMBL" id="AL845463">
    <property type="status" value="NOT_ANNOTATED_CDS"/>
    <property type="molecule type" value="Genomic_DNA"/>
</dbReference>
<dbReference type="EMBL" id="BC003258">
    <property type="protein sequence ID" value="AAH03258.1"/>
    <property type="molecule type" value="mRNA"/>
</dbReference>
<dbReference type="EMBL" id="BC034706">
    <property type="protein sequence ID" value="AAH34706.1"/>
    <property type="molecule type" value="mRNA"/>
</dbReference>
<dbReference type="CCDS" id="CCDS24727.1"/>
<dbReference type="RefSeq" id="NP_001243445.1">
    <property type="nucleotide sequence ID" value="NM_001256516.1"/>
</dbReference>
<dbReference type="RefSeq" id="NP_001243446.1">
    <property type="nucleotide sequence ID" value="NM_001256517.1"/>
</dbReference>
<dbReference type="RefSeq" id="NP_001243447.1">
    <property type="nucleotide sequence ID" value="NM_001256518.1"/>
</dbReference>
<dbReference type="RefSeq" id="NP_001243448.1">
    <property type="nucleotide sequence ID" value="NM_001256519.1"/>
</dbReference>
<dbReference type="RefSeq" id="NP_001243449.1">
    <property type="nucleotide sequence ID" value="NM_001256520.1"/>
</dbReference>
<dbReference type="RefSeq" id="NP_848876.2">
    <property type="nucleotide sequence ID" value="NM_178761.5"/>
</dbReference>
<dbReference type="RefSeq" id="XP_006533583.1">
    <property type="nucleotide sequence ID" value="XM_006533520.3"/>
</dbReference>
<dbReference type="RefSeq" id="XP_011247371.1">
    <property type="nucleotide sequence ID" value="XM_011249069.2"/>
</dbReference>
<dbReference type="RefSeq" id="XP_017170079.1">
    <property type="nucleotide sequence ID" value="XM_017314590.1"/>
</dbReference>
<dbReference type="RefSeq" id="XP_017170080.1">
    <property type="nucleotide sequence ID" value="XM_017314591.1"/>
</dbReference>
<dbReference type="SMR" id="Q99LH4"/>
<dbReference type="BioGRID" id="235298">
    <property type="interactions" value="1"/>
</dbReference>
<dbReference type="FunCoup" id="Q99LH4">
    <property type="interactions" value="19"/>
</dbReference>
<dbReference type="STRING" id="10090.ENSMUSP00000104457"/>
<dbReference type="PhosphoSitePlus" id="Q99LH4"/>
<dbReference type="PaxDb" id="10090-ENSMUSP00000104457"/>
<dbReference type="PeptideAtlas" id="Q99LH4"/>
<dbReference type="ProteomicsDB" id="302139"/>
<dbReference type="Antibodypedia" id="34768">
    <property type="antibodies" value="117 antibodies from 19 providers"/>
</dbReference>
<dbReference type="DNASU" id="319475"/>
<dbReference type="Ensembl" id="ENSMUST00000057836.12">
    <property type="protein sequence ID" value="ENSMUSP00000060088.6"/>
    <property type="gene ID" value="ENSMUSG00000049755.15"/>
</dbReference>
<dbReference type="Ensembl" id="ENSMUST00000064786.12">
    <property type="protein sequence ID" value="ENSMUSP00000070567.6"/>
    <property type="gene ID" value="ENSMUSG00000049755.15"/>
</dbReference>
<dbReference type="Ensembl" id="ENSMUST00000108829.8">
    <property type="protein sequence ID" value="ENSMUSP00000104457.2"/>
    <property type="gene ID" value="ENSMUSG00000049755.15"/>
</dbReference>
<dbReference type="GeneID" id="319475"/>
<dbReference type="KEGG" id="mmu:319475"/>
<dbReference type="UCSC" id="uc007jaz.2">
    <property type="organism name" value="mouse"/>
</dbReference>
<dbReference type="AGR" id="MGI:2442105"/>
<dbReference type="CTD" id="319475"/>
<dbReference type="MGI" id="MGI:2442105">
    <property type="gene designation" value="Zfp672"/>
</dbReference>
<dbReference type="VEuPathDB" id="HostDB:ENSMUSG00000049755"/>
<dbReference type="eggNOG" id="KOG1721">
    <property type="taxonomic scope" value="Eukaryota"/>
</dbReference>
<dbReference type="GeneTree" id="ENSGT01130000278280"/>
<dbReference type="HOGENOM" id="CLU_002678_44_0_1"/>
<dbReference type="InParanoid" id="Q99LH4"/>
<dbReference type="OMA" id="CPCRTCG"/>
<dbReference type="OrthoDB" id="1095242at2759"/>
<dbReference type="PhylomeDB" id="Q99LH4"/>
<dbReference type="TreeFam" id="TF337999"/>
<dbReference type="BioGRID-ORCS" id="319475">
    <property type="hits" value="1 hit in 78 CRISPR screens"/>
</dbReference>
<dbReference type="ChiTaRS" id="Zfp672">
    <property type="organism name" value="mouse"/>
</dbReference>
<dbReference type="PRO" id="PR:Q99LH4"/>
<dbReference type="Proteomes" id="UP000000589">
    <property type="component" value="Chromosome 11"/>
</dbReference>
<dbReference type="RNAct" id="Q99LH4">
    <property type="molecule type" value="protein"/>
</dbReference>
<dbReference type="Bgee" id="ENSMUSG00000049755">
    <property type="expression patterns" value="Expressed in spermatocyte and 254 other cell types or tissues"/>
</dbReference>
<dbReference type="ExpressionAtlas" id="Q99LH4">
    <property type="expression patterns" value="baseline and differential"/>
</dbReference>
<dbReference type="GO" id="GO:0005654">
    <property type="term" value="C:nucleoplasm"/>
    <property type="evidence" value="ECO:0007669"/>
    <property type="project" value="Ensembl"/>
</dbReference>
<dbReference type="GO" id="GO:0003677">
    <property type="term" value="F:DNA binding"/>
    <property type="evidence" value="ECO:0007669"/>
    <property type="project" value="UniProtKB-KW"/>
</dbReference>
<dbReference type="GO" id="GO:0008270">
    <property type="term" value="F:zinc ion binding"/>
    <property type="evidence" value="ECO:0007669"/>
    <property type="project" value="UniProtKB-KW"/>
</dbReference>
<dbReference type="GO" id="GO:0006357">
    <property type="term" value="P:regulation of transcription by RNA polymerase II"/>
    <property type="evidence" value="ECO:0007669"/>
    <property type="project" value="UniProtKB-ARBA"/>
</dbReference>
<dbReference type="FunFam" id="3.30.160.60:FF:002063">
    <property type="entry name" value="RB associated KRAB zinc finger"/>
    <property type="match status" value="1"/>
</dbReference>
<dbReference type="FunFam" id="3.30.160.60:FF:000446">
    <property type="entry name" value="Zinc finger protein"/>
    <property type="match status" value="2"/>
</dbReference>
<dbReference type="FunFam" id="3.30.160.60:FF:002343">
    <property type="entry name" value="Zinc finger protein 33A"/>
    <property type="match status" value="2"/>
</dbReference>
<dbReference type="FunFam" id="3.30.160.60:FF:000399">
    <property type="entry name" value="zinc finger protein 521"/>
    <property type="match status" value="1"/>
</dbReference>
<dbReference type="FunFam" id="3.30.160.60:FF:001468">
    <property type="entry name" value="Zinc finger protein 672"/>
    <property type="match status" value="1"/>
</dbReference>
<dbReference type="FunFam" id="3.30.160.60:FF:002331">
    <property type="entry name" value="Zinc finger protein 672"/>
    <property type="match status" value="1"/>
</dbReference>
<dbReference type="FunFam" id="3.30.160.60:FF:003130">
    <property type="entry name" value="Zinc finger protein 672"/>
    <property type="match status" value="1"/>
</dbReference>
<dbReference type="FunFam" id="3.30.160.60:FF:001442">
    <property type="entry name" value="zinc finger protein 696"/>
    <property type="match status" value="1"/>
</dbReference>
<dbReference type="Gene3D" id="3.30.160.60">
    <property type="entry name" value="Classic Zinc Finger"/>
    <property type="match status" value="12"/>
</dbReference>
<dbReference type="InterPro" id="IPR036236">
    <property type="entry name" value="Znf_C2H2_sf"/>
</dbReference>
<dbReference type="InterPro" id="IPR013087">
    <property type="entry name" value="Znf_C2H2_type"/>
</dbReference>
<dbReference type="PANTHER" id="PTHR14003">
    <property type="entry name" value="TRANSCRIPTIONAL REPRESSOR PROTEIN YY"/>
    <property type="match status" value="1"/>
</dbReference>
<dbReference type="PANTHER" id="PTHR14003:SF19">
    <property type="entry name" value="YY2 TRANSCRIPTION FACTOR"/>
    <property type="match status" value="1"/>
</dbReference>
<dbReference type="Pfam" id="PF00096">
    <property type="entry name" value="zf-C2H2"/>
    <property type="match status" value="9"/>
</dbReference>
<dbReference type="Pfam" id="PF13894">
    <property type="entry name" value="zf-C2H2_4"/>
    <property type="match status" value="1"/>
</dbReference>
<dbReference type="SMART" id="SM00355">
    <property type="entry name" value="ZnF_C2H2"/>
    <property type="match status" value="14"/>
</dbReference>
<dbReference type="SUPFAM" id="SSF57667">
    <property type="entry name" value="beta-beta-alpha zinc fingers"/>
    <property type="match status" value="8"/>
</dbReference>
<dbReference type="PROSITE" id="PS00028">
    <property type="entry name" value="ZINC_FINGER_C2H2_1"/>
    <property type="match status" value="13"/>
</dbReference>
<dbReference type="PROSITE" id="PS50157">
    <property type="entry name" value="ZINC_FINGER_C2H2_2"/>
    <property type="match status" value="13"/>
</dbReference>
<name>ZN672_MOUSE</name>
<protein>
    <recommendedName>
        <fullName>Zinc finger protein 672</fullName>
    </recommendedName>
</protein>
<keyword id="KW-0238">DNA-binding</keyword>
<keyword id="KW-0479">Metal-binding</keyword>
<keyword id="KW-0539">Nucleus</keyword>
<keyword id="KW-1185">Reference proteome</keyword>
<keyword id="KW-0677">Repeat</keyword>
<keyword id="KW-0804">Transcription</keyword>
<keyword id="KW-0805">Transcription regulation</keyword>
<keyword id="KW-0862">Zinc</keyword>
<keyword id="KW-0863">Zinc-finger</keyword>
<accession>Q99LH4</accession>
<accession>Q8BIR7</accession>
<reference key="1">
    <citation type="journal article" date="2005" name="Science">
        <title>The transcriptional landscape of the mammalian genome.</title>
        <authorList>
            <person name="Carninci P."/>
            <person name="Kasukawa T."/>
            <person name="Katayama S."/>
            <person name="Gough J."/>
            <person name="Frith M.C."/>
            <person name="Maeda N."/>
            <person name="Oyama R."/>
            <person name="Ravasi T."/>
            <person name="Lenhard B."/>
            <person name="Wells C."/>
            <person name="Kodzius R."/>
            <person name="Shimokawa K."/>
            <person name="Bajic V.B."/>
            <person name="Brenner S.E."/>
            <person name="Batalov S."/>
            <person name="Forrest A.R."/>
            <person name="Zavolan M."/>
            <person name="Davis M.J."/>
            <person name="Wilming L.G."/>
            <person name="Aidinis V."/>
            <person name="Allen J.E."/>
            <person name="Ambesi-Impiombato A."/>
            <person name="Apweiler R."/>
            <person name="Aturaliya R.N."/>
            <person name="Bailey T.L."/>
            <person name="Bansal M."/>
            <person name="Baxter L."/>
            <person name="Beisel K.W."/>
            <person name="Bersano T."/>
            <person name="Bono H."/>
            <person name="Chalk A.M."/>
            <person name="Chiu K.P."/>
            <person name="Choudhary V."/>
            <person name="Christoffels A."/>
            <person name="Clutterbuck D.R."/>
            <person name="Crowe M.L."/>
            <person name="Dalla E."/>
            <person name="Dalrymple B.P."/>
            <person name="de Bono B."/>
            <person name="Della Gatta G."/>
            <person name="di Bernardo D."/>
            <person name="Down T."/>
            <person name="Engstrom P."/>
            <person name="Fagiolini M."/>
            <person name="Faulkner G."/>
            <person name="Fletcher C.F."/>
            <person name="Fukushima T."/>
            <person name="Furuno M."/>
            <person name="Futaki S."/>
            <person name="Gariboldi M."/>
            <person name="Georgii-Hemming P."/>
            <person name="Gingeras T.R."/>
            <person name="Gojobori T."/>
            <person name="Green R.E."/>
            <person name="Gustincich S."/>
            <person name="Harbers M."/>
            <person name="Hayashi Y."/>
            <person name="Hensch T.K."/>
            <person name="Hirokawa N."/>
            <person name="Hill D."/>
            <person name="Huminiecki L."/>
            <person name="Iacono M."/>
            <person name="Ikeo K."/>
            <person name="Iwama A."/>
            <person name="Ishikawa T."/>
            <person name="Jakt M."/>
            <person name="Kanapin A."/>
            <person name="Katoh M."/>
            <person name="Kawasawa Y."/>
            <person name="Kelso J."/>
            <person name="Kitamura H."/>
            <person name="Kitano H."/>
            <person name="Kollias G."/>
            <person name="Krishnan S.P."/>
            <person name="Kruger A."/>
            <person name="Kummerfeld S.K."/>
            <person name="Kurochkin I.V."/>
            <person name="Lareau L.F."/>
            <person name="Lazarevic D."/>
            <person name="Lipovich L."/>
            <person name="Liu J."/>
            <person name="Liuni S."/>
            <person name="McWilliam S."/>
            <person name="Madan Babu M."/>
            <person name="Madera M."/>
            <person name="Marchionni L."/>
            <person name="Matsuda H."/>
            <person name="Matsuzawa S."/>
            <person name="Miki H."/>
            <person name="Mignone F."/>
            <person name="Miyake S."/>
            <person name="Morris K."/>
            <person name="Mottagui-Tabar S."/>
            <person name="Mulder N."/>
            <person name="Nakano N."/>
            <person name="Nakauchi H."/>
            <person name="Ng P."/>
            <person name="Nilsson R."/>
            <person name="Nishiguchi S."/>
            <person name="Nishikawa S."/>
            <person name="Nori F."/>
            <person name="Ohara O."/>
            <person name="Okazaki Y."/>
            <person name="Orlando V."/>
            <person name="Pang K.C."/>
            <person name="Pavan W.J."/>
            <person name="Pavesi G."/>
            <person name="Pesole G."/>
            <person name="Petrovsky N."/>
            <person name="Piazza S."/>
            <person name="Reed J."/>
            <person name="Reid J.F."/>
            <person name="Ring B.Z."/>
            <person name="Ringwald M."/>
            <person name="Rost B."/>
            <person name="Ruan Y."/>
            <person name="Salzberg S.L."/>
            <person name="Sandelin A."/>
            <person name="Schneider C."/>
            <person name="Schoenbach C."/>
            <person name="Sekiguchi K."/>
            <person name="Semple C.A."/>
            <person name="Seno S."/>
            <person name="Sessa L."/>
            <person name="Sheng Y."/>
            <person name="Shibata Y."/>
            <person name="Shimada H."/>
            <person name="Shimada K."/>
            <person name="Silva D."/>
            <person name="Sinclair B."/>
            <person name="Sperling S."/>
            <person name="Stupka E."/>
            <person name="Sugiura K."/>
            <person name="Sultana R."/>
            <person name="Takenaka Y."/>
            <person name="Taki K."/>
            <person name="Tammoja K."/>
            <person name="Tan S.L."/>
            <person name="Tang S."/>
            <person name="Taylor M.S."/>
            <person name="Tegner J."/>
            <person name="Teichmann S.A."/>
            <person name="Ueda H.R."/>
            <person name="van Nimwegen E."/>
            <person name="Verardo R."/>
            <person name="Wei C.L."/>
            <person name="Yagi K."/>
            <person name="Yamanishi H."/>
            <person name="Zabarovsky E."/>
            <person name="Zhu S."/>
            <person name="Zimmer A."/>
            <person name="Hide W."/>
            <person name="Bult C."/>
            <person name="Grimmond S.M."/>
            <person name="Teasdale R.D."/>
            <person name="Liu E.T."/>
            <person name="Brusic V."/>
            <person name="Quackenbush J."/>
            <person name="Wahlestedt C."/>
            <person name="Mattick J.S."/>
            <person name="Hume D.A."/>
            <person name="Kai C."/>
            <person name="Sasaki D."/>
            <person name="Tomaru Y."/>
            <person name="Fukuda S."/>
            <person name="Kanamori-Katayama M."/>
            <person name="Suzuki M."/>
            <person name="Aoki J."/>
            <person name="Arakawa T."/>
            <person name="Iida J."/>
            <person name="Imamura K."/>
            <person name="Itoh M."/>
            <person name="Kato T."/>
            <person name="Kawaji H."/>
            <person name="Kawagashira N."/>
            <person name="Kawashima T."/>
            <person name="Kojima M."/>
            <person name="Kondo S."/>
            <person name="Konno H."/>
            <person name="Nakano K."/>
            <person name="Ninomiya N."/>
            <person name="Nishio T."/>
            <person name="Okada M."/>
            <person name="Plessy C."/>
            <person name="Shibata K."/>
            <person name="Shiraki T."/>
            <person name="Suzuki S."/>
            <person name="Tagami M."/>
            <person name="Waki K."/>
            <person name="Watahiki A."/>
            <person name="Okamura-Oho Y."/>
            <person name="Suzuki H."/>
            <person name="Kawai J."/>
            <person name="Hayashizaki Y."/>
        </authorList>
    </citation>
    <scope>NUCLEOTIDE SEQUENCE [LARGE SCALE MRNA]</scope>
    <source>
        <strain>C57BL/6J</strain>
        <tissue>Embryo</tissue>
        <tissue>Lung</tissue>
        <tissue>Testis</tissue>
    </source>
</reference>
<reference key="2">
    <citation type="journal article" date="2009" name="PLoS Biol.">
        <title>Lineage-specific biology revealed by a finished genome assembly of the mouse.</title>
        <authorList>
            <person name="Church D.M."/>
            <person name="Goodstadt L."/>
            <person name="Hillier L.W."/>
            <person name="Zody M.C."/>
            <person name="Goldstein S."/>
            <person name="She X."/>
            <person name="Bult C.J."/>
            <person name="Agarwala R."/>
            <person name="Cherry J.L."/>
            <person name="DiCuccio M."/>
            <person name="Hlavina W."/>
            <person name="Kapustin Y."/>
            <person name="Meric P."/>
            <person name="Maglott D."/>
            <person name="Birtle Z."/>
            <person name="Marques A.C."/>
            <person name="Graves T."/>
            <person name="Zhou S."/>
            <person name="Teague B."/>
            <person name="Potamousis K."/>
            <person name="Churas C."/>
            <person name="Place M."/>
            <person name="Herschleb J."/>
            <person name="Runnheim R."/>
            <person name="Forrest D."/>
            <person name="Amos-Landgraf J."/>
            <person name="Schwartz D.C."/>
            <person name="Cheng Z."/>
            <person name="Lindblad-Toh K."/>
            <person name="Eichler E.E."/>
            <person name="Ponting C.P."/>
        </authorList>
    </citation>
    <scope>NUCLEOTIDE SEQUENCE [LARGE SCALE GENOMIC DNA]</scope>
    <source>
        <strain>C57BL/6J</strain>
    </source>
</reference>
<reference key="3">
    <citation type="journal article" date="2004" name="Genome Res.">
        <title>The status, quality, and expansion of the NIH full-length cDNA project: the Mammalian Gene Collection (MGC).</title>
        <authorList>
            <consortium name="The MGC Project Team"/>
        </authorList>
    </citation>
    <scope>NUCLEOTIDE SEQUENCE [LARGE SCALE MRNA]</scope>
    <source>
        <strain>Czech II</strain>
        <strain>FVB/N</strain>
        <tissue>Mammary tumor</tissue>
    </source>
</reference>
<organism>
    <name type="scientific">Mus musculus</name>
    <name type="common">Mouse</name>
    <dbReference type="NCBI Taxonomy" id="10090"/>
    <lineage>
        <taxon>Eukaryota</taxon>
        <taxon>Metazoa</taxon>
        <taxon>Chordata</taxon>
        <taxon>Craniata</taxon>
        <taxon>Vertebrata</taxon>
        <taxon>Euteleostomi</taxon>
        <taxon>Mammalia</taxon>
        <taxon>Eutheria</taxon>
        <taxon>Euarchontoglires</taxon>
        <taxon>Glires</taxon>
        <taxon>Rodentia</taxon>
        <taxon>Myomorpha</taxon>
        <taxon>Muroidea</taxon>
        <taxon>Muridae</taxon>
        <taxon>Murinae</taxon>
        <taxon>Mus</taxon>
        <taxon>Mus</taxon>
    </lineage>
</organism>